<accession>A4WGF0</accession>
<comment type="function">
    <text evidence="1">F(1)F(0) ATP synthase produces ATP from ADP in the presence of a proton or sodium gradient. F-type ATPases consist of two structural domains, F(1) containing the extramembraneous catalytic core and F(0) containing the membrane proton channel, linked together by a central stalk and a peripheral stalk. During catalysis, ATP synthesis in the catalytic domain of F(1) is coupled via a rotary mechanism of the central stalk subunits to proton translocation.</text>
</comment>
<comment type="function">
    <text evidence="1">Key component of the F(0) channel; it plays a direct role in translocation across the membrane. A homomeric c-ring of between 10-14 subunits forms the central stalk rotor element with the F(1) delta and epsilon subunits.</text>
</comment>
<comment type="subunit">
    <text evidence="1">F-type ATPases have 2 components, F(1) - the catalytic core - and F(0) - the membrane proton channel. F(1) has five subunits: alpha(3), beta(3), gamma(1), delta(1), epsilon(1). F(0) has three main subunits: a(1), b(2) and c(10-14). The alpha and beta chains form an alternating ring which encloses part of the gamma chain. F(1) is attached to F(0) by a central stalk formed by the gamma and epsilon chains, while a peripheral stalk is formed by the delta and b chains.</text>
</comment>
<comment type="subcellular location">
    <subcellularLocation>
        <location evidence="1">Cell inner membrane</location>
        <topology evidence="1">Multi-pass membrane protein</topology>
    </subcellularLocation>
</comment>
<comment type="similarity">
    <text evidence="1">Belongs to the ATPase C chain family.</text>
</comment>
<gene>
    <name evidence="1" type="primary">atpE</name>
    <name type="ordered locus">Ent638_4127</name>
</gene>
<organism>
    <name type="scientific">Enterobacter sp. (strain 638)</name>
    <dbReference type="NCBI Taxonomy" id="399742"/>
    <lineage>
        <taxon>Bacteria</taxon>
        <taxon>Pseudomonadati</taxon>
        <taxon>Pseudomonadota</taxon>
        <taxon>Gammaproteobacteria</taxon>
        <taxon>Enterobacterales</taxon>
        <taxon>Enterobacteriaceae</taxon>
        <taxon>Enterobacter</taxon>
    </lineage>
</organism>
<keyword id="KW-0066">ATP synthesis</keyword>
<keyword id="KW-0997">Cell inner membrane</keyword>
<keyword id="KW-1003">Cell membrane</keyword>
<keyword id="KW-0138">CF(0)</keyword>
<keyword id="KW-0375">Hydrogen ion transport</keyword>
<keyword id="KW-0406">Ion transport</keyword>
<keyword id="KW-0446">Lipid-binding</keyword>
<keyword id="KW-0472">Membrane</keyword>
<keyword id="KW-0812">Transmembrane</keyword>
<keyword id="KW-1133">Transmembrane helix</keyword>
<keyword id="KW-0813">Transport</keyword>
<dbReference type="EMBL" id="CP000653">
    <property type="protein sequence ID" value="ABP62780.1"/>
    <property type="molecule type" value="Genomic_DNA"/>
</dbReference>
<dbReference type="RefSeq" id="WP_000429386.1">
    <property type="nucleotide sequence ID" value="NC_009436.1"/>
</dbReference>
<dbReference type="BMRB" id="A4WGF0"/>
<dbReference type="SMR" id="A4WGF0"/>
<dbReference type="STRING" id="399742.Ent638_4127"/>
<dbReference type="GeneID" id="98390858"/>
<dbReference type="KEGG" id="ent:Ent638_4127"/>
<dbReference type="eggNOG" id="ENOG5032S3K">
    <property type="taxonomic scope" value="Bacteria"/>
</dbReference>
<dbReference type="HOGENOM" id="CLU_148047_1_0_6"/>
<dbReference type="OrthoDB" id="9811659at2"/>
<dbReference type="Proteomes" id="UP000000230">
    <property type="component" value="Chromosome"/>
</dbReference>
<dbReference type="GO" id="GO:0005886">
    <property type="term" value="C:plasma membrane"/>
    <property type="evidence" value="ECO:0007669"/>
    <property type="project" value="UniProtKB-SubCell"/>
</dbReference>
<dbReference type="GO" id="GO:0045259">
    <property type="term" value="C:proton-transporting ATP synthase complex"/>
    <property type="evidence" value="ECO:0007669"/>
    <property type="project" value="UniProtKB-KW"/>
</dbReference>
<dbReference type="GO" id="GO:0033177">
    <property type="term" value="C:proton-transporting two-sector ATPase complex, proton-transporting domain"/>
    <property type="evidence" value="ECO:0007669"/>
    <property type="project" value="InterPro"/>
</dbReference>
<dbReference type="GO" id="GO:0008289">
    <property type="term" value="F:lipid binding"/>
    <property type="evidence" value="ECO:0007669"/>
    <property type="project" value="UniProtKB-KW"/>
</dbReference>
<dbReference type="GO" id="GO:0046933">
    <property type="term" value="F:proton-transporting ATP synthase activity, rotational mechanism"/>
    <property type="evidence" value="ECO:0007669"/>
    <property type="project" value="UniProtKB-UniRule"/>
</dbReference>
<dbReference type="CDD" id="cd18185">
    <property type="entry name" value="ATP-synt_Fo_c_ATPE"/>
    <property type="match status" value="1"/>
</dbReference>
<dbReference type="FunFam" id="1.20.20.10:FF:000002">
    <property type="entry name" value="ATP synthase subunit c"/>
    <property type="match status" value="1"/>
</dbReference>
<dbReference type="Gene3D" id="1.20.20.10">
    <property type="entry name" value="F1F0 ATP synthase subunit C"/>
    <property type="match status" value="1"/>
</dbReference>
<dbReference type="HAMAP" id="MF_01396">
    <property type="entry name" value="ATP_synth_c_bact"/>
    <property type="match status" value="1"/>
</dbReference>
<dbReference type="InterPro" id="IPR005953">
    <property type="entry name" value="ATP_synth_csu_bac/chlpt"/>
</dbReference>
<dbReference type="InterPro" id="IPR000454">
    <property type="entry name" value="ATP_synth_F0_csu"/>
</dbReference>
<dbReference type="InterPro" id="IPR020537">
    <property type="entry name" value="ATP_synth_F0_csu_DDCD_BS"/>
</dbReference>
<dbReference type="InterPro" id="IPR038662">
    <property type="entry name" value="ATP_synth_F0_csu_sf"/>
</dbReference>
<dbReference type="InterPro" id="IPR002379">
    <property type="entry name" value="ATPase_proteolipid_c-like_dom"/>
</dbReference>
<dbReference type="InterPro" id="IPR035921">
    <property type="entry name" value="F/V-ATP_Csub_sf"/>
</dbReference>
<dbReference type="NCBIfam" id="TIGR01260">
    <property type="entry name" value="ATP_synt_c"/>
    <property type="match status" value="1"/>
</dbReference>
<dbReference type="NCBIfam" id="NF005363">
    <property type="entry name" value="PRK06876.1"/>
    <property type="match status" value="1"/>
</dbReference>
<dbReference type="Pfam" id="PF00137">
    <property type="entry name" value="ATP-synt_C"/>
    <property type="match status" value="1"/>
</dbReference>
<dbReference type="PRINTS" id="PR00124">
    <property type="entry name" value="ATPASEC"/>
</dbReference>
<dbReference type="SUPFAM" id="SSF81333">
    <property type="entry name" value="F1F0 ATP synthase subunit C"/>
    <property type="match status" value="1"/>
</dbReference>
<dbReference type="PROSITE" id="PS00605">
    <property type="entry name" value="ATPASE_C"/>
    <property type="match status" value="1"/>
</dbReference>
<evidence type="ECO:0000255" key="1">
    <source>
        <dbReference type="HAMAP-Rule" id="MF_01396"/>
    </source>
</evidence>
<protein>
    <recommendedName>
        <fullName evidence="1">ATP synthase subunit c</fullName>
    </recommendedName>
    <alternativeName>
        <fullName evidence="1">ATP synthase F(0) sector subunit c</fullName>
    </alternativeName>
    <alternativeName>
        <fullName evidence="1">F-type ATPase subunit c</fullName>
        <shortName evidence="1">F-ATPase subunit c</shortName>
    </alternativeName>
    <alternativeName>
        <fullName evidence="1">Lipid-binding protein</fullName>
    </alternativeName>
</protein>
<sequence>MENLNMDLLYMAAAVMMGLAAIGAAIGIGILGGKFLEGAARQPDLIPLLRTQFFIVMGLVDAIPMIAVGLGLYVMFAVA</sequence>
<feature type="chain" id="PRO_1000184376" description="ATP synthase subunit c">
    <location>
        <begin position="1"/>
        <end position="79"/>
    </location>
</feature>
<feature type="transmembrane region" description="Helical" evidence="1">
    <location>
        <begin position="11"/>
        <end position="31"/>
    </location>
</feature>
<feature type="transmembrane region" description="Helical" evidence="1">
    <location>
        <begin position="53"/>
        <end position="73"/>
    </location>
</feature>
<feature type="site" description="Reversibly protonated during proton transport" evidence="1">
    <location>
        <position position="61"/>
    </location>
</feature>
<reference key="1">
    <citation type="journal article" date="2010" name="PLoS Genet.">
        <title>Genome sequence of the plant growth promoting endophytic bacterium Enterobacter sp. 638.</title>
        <authorList>
            <person name="Taghavi S."/>
            <person name="van der Lelie D."/>
            <person name="Hoffman A."/>
            <person name="Zhang Y.B."/>
            <person name="Walla M.D."/>
            <person name="Vangronsveld J."/>
            <person name="Newman L."/>
            <person name="Monchy S."/>
        </authorList>
    </citation>
    <scope>NUCLEOTIDE SEQUENCE [LARGE SCALE GENOMIC DNA]</scope>
    <source>
        <strain>638</strain>
    </source>
</reference>
<name>ATPL_ENT38</name>
<proteinExistence type="inferred from homology"/>